<evidence type="ECO:0000250" key="1"/>
<evidence type="ECO:0000250" key="2">
    <source>
        <dbReference type="UniProtKB" id="Q7TNC6"/>
    </source>
</evidence>
<evidence type="ECO:0000255" key="3">
    <source>
        <dbReference type="PROSITE-ProRule" id="PRU00283"/>
    </source>
</evidence>
<evidence type="ECO:0000256" key="4">
    <source>
        <dbReference type="SAM" id="MobiDB-lite"/>
    </source>
</evidence>
<evidence type="ECO:0000269" key="5">
    <source>
    </source>
</evidence>
<evidence type="ECO:0000303" key="6">
    <source>
    </source>
</evidence>
<evidence type="ECO:0000305" key="7"/>
<organism>
    <name type="scientific">Homo sapiens</name>
    <name type="common">Human</name>
    <dbReference type="NCBI Taxonomy" id="9606"/>
    <lineage>
        <taxon>Eukaryota</taxon>
        <taxon>Metazoa</taxon>
        <taxon>Chordata</taxon>
        <taxon>Craniata</taxon>
        <taxon>Vertebrata</taxon>
        <taxon>Euteleostomi</taxon>
        <taxon>Mammalia</taxon>
        <taxon>Eutheria</taxon>
        <taxon>Euarchontoglires</taxon>
        <taxon>Primates</taxon>
        <taxon>Haplorrhini</taxon>
        <taxon>Catarrhini</taxon>
        <taxon>Hominidae</taxon>
        <taxon>Homo</taxon>
    </lineage>
</organism>
<proteinExistence type="evidence at protein level"/>
<keyword id="KW-0025">Alternative splicing</keyword>
<keyword id="KW-0067">ATP-binding</keyword>
<keyword id="KW-0963">Cytoplasm</keyword>
<keyword id="KW-0206">Cytoskeleton</keyword>
<keyword id="KW-0217">Developmental protein</keyword>
<keyword id="KW-0493">Microtubule</keyword>
<keyword id="KW-0505">Motor protein</keyword>
<keyword id="KW-0547">Nucleotide-binding</keyword>
<keyword id="KW-0597">Phosphoprotein</keyword>
<keyword id="KW-1267">Proteomics identification</keyword>
<keyword id="KW-1185">Reference proteome</keyword>
<keyword id="KW-0832">Ubl conjugation</keyword>
<reference key="1">
    <citation type="submission" date="2005-02" db="EMBL/GenBank/DDBJ databases">
        <title>Cloning, characterization and tissue expression of the novel human gene KIF26B.</title>
        <authorList>
            <person name="Parnau J."/>
            <person name="Cox J."/>
            <person name="Mallya U."/>
            <person name="Raymond L."/>
        </authorList>
    </citation>
    <scope>NUCLEOTIDE SEQUENCE [MRNA] (ISOFORM 1)</scope>
</reference>
<reference key="2">
    <citation type="journal article" date="2004" name="Nat. Genet.">
        <title>Complete sequencing and characterization of 21,243 full-length human cDNAs.</title>
        <authorList>
            <person name="Ota T."/>
            <person name="Suzuki Y."/>
            <person name="Nishikawa T."/>
            <person name="Otsuki T."/>
            <person name="Sugiyama T."/>
            <person name="Irie R."/>
            <person name="Wakamatsu A."/>
            <person name="Hayashi K."/>
            <person name="Sato H."/>
            <person name="Nagai K."/>
            <person name="Kimura K."/>
            <person name="Makita H."/>
            <person name="Sekine M."/>
            <person name="Obayashi M."/>
            <person name="Nishi T."/>
            <person name="Shibahara T."/>
            <person name="Tanaka T."/>
            <person name="Ishii S."/>
            <person name="Yamamoto J."/>
            <person name="Saito K."/>
            <person name="Kawai Y."/>
            <person name="Isono Y."/>
            <person name="Nakamura Y."/>
            <person name="Nagahari K."/>
            <person name="Murakami K."/>
            <person name="Yasuda T."/>
            <person name="Iwayanagi T."/>
            <person name="Wagatsuma M."/>
            <person name="Shiratori A."/>
            <person name="Sudo H."/>
            <person name="Hosoiri T."/>
            <person name="Kaku Y."/>
            <person name="Kodaira H."/>
            <person name="Kondo H."/>
            <person name="Sugawara M."/>
            <person name="Takahashi M."/>
            <person name="Kanda K."/>
            <person name="Yokoi T."/>
            <person name="Furuya T."/>
            <person name="Kikkawa E."/>
            <person name="Omura Y."/>
            <person name="Abe K."/>
            <person name="Kamihara K."/>
            <person name="Katsuta N."/>
            <person name="Sato K."/>
            <person name="Tanikawa M."/>
            <person name="Yamazaki M."/>
            <person name="Ninomiya K."/>
            <person name="Ishibashi T."/>
            <person name="Yamashita H."/>
            <person name="Murakawa K."/>
            <person name="Fujimori K."/>
            <person name="Tanai H."/>
            <person name="Kimata M."/>
            <person name="Watanabe M."/>
            <person name="Hiraoka S."/>
            <person name="Chiba Y."/>
            <person name="Ishida S."/>
            <person name="Ono Y."/>
            <person name="Takiguchi S."/>
            <person name="Watanabe S."/>
            <person name="Yosida M."/>
            <person name="Hotuta T."/>
            <person name="Kusano J."/>
            <person name="Kanehori K."/>
            <person name="Takahashi-Fujii A."/>
            <person name="Hara H."/>
            <person name="Tanase T.-O."/>
            <person name="Nomura Y."/>
            <person name="Togiya S."/>
            <person name="Komai F."/>
            <person name="Hara R."/>
            <person name="Takeuchi K."/>
            <person name="Arita M."/>
            <person name="Imose N."/>
            <person name="Musashino K."/>
            <person name="Yuuki H."/>
            <person name="Oshima A."/>
            <person name="Sasaki N."/>
            <person name="Aotsuka S."/>
            <person name="Yoshikawa Y."/>
            <person name="Matsunawa H."/>
            <person name="Ichihara T."/>
            <person name="Shiohata N."/>
            <person name="Sano S."/>
            <person name="Moriya S."/>
            <person name="Momiyama H."/>
            <person name="Satoh N."/>
            <person name="Takami S."/>
            <person name="Terashima Y."/>
            <person name="Suzuki O."/>
            <person name="Nakagawa S."/>
            <person name="Senoh A."/>
            <person name="Mizoguchi H."/>
            <person name="Goto Y."/>
            <person name="Shimizu F."/>
            <person name="Wakebe H."/>
            <person name="Hishigaki H."/>
            <person name="Watanabe T."/>
            <person name="Sugiyama A."/>
            <person name="Takemoto M."/>
            <person name="Kawakami B."/>
            <person name="Yamazaki M."/>
            <person name="Watanabe K."/>
            <person name="Kumagai A."/>
            <person name="Itakura S."/>
            <person name="Fukuzumi Y."/>
            <person name="Fujimori Y."/>
            <person name="Komiyama M."/>
            <person name="Tashiro H."/>
            <person name="Tanigami A."/>
            <person name="Fujiwara T."/>
            <person name="Ono T."/>
            <person name="Yamada K."/>
            <person name="Fujii Y."/>
            <person name="Ozaki K."/>
            <person name="Hirao M."/>
            <person name="Ohmori Y."/>
            <person name="Kawabata A."/>
            <person name="Hikiji T."/>
            <person name="Kobatake N."/>
            <person name="Inagaki H."/>
            <person name="Ikema Y."/>
            <person name="Okamoto S."/>
            <person name="Okitani R."/>
            <person name="Kawakami T."/>
            <person name="Noguchi S."/>
            <person name="Itoh T."/>
            <person name="Shigeta K."/>
            <person name="Senba T."/>
            <person name="Matsumura K."/>
            <person name="Nakajima Y."/>
            <person name="Mizuno T."/>
            <person name="Morinaga M."/>
            <person name="Sasaki M."/>
            <person name="Togashi T."/>
            <person name="Oyama M."/>
            <person name="Hata H."/>
            <person name="Watanabe M."/>
            <person name="Komatsu T."/>
            <person name="Mizushima-Sugano J."/>
            <person name="Satoh T."/>
            <person name="Shirai Y."/>
            <person name="Takahashi Y."/>
            <person name="Nakagawa K."/>
            <person name="Okumura K."/>
            <person name="Nagase T."/>
            <person name="Nomura N."/>
            <person name="Kikuchi H."/>
            <person name="Masuho Y."/>
            <person name="Yamashita R."/>
            <person name="Nakai K."/>
            <person name="Yada T."/>
            <person name="Nakamura Y."/>
            <person name="Ohara O."/>
            <person name="Isogai T."/>
            <person name="Sugano S."/>
        </authorList>
    </citation>
    <scope>NUCLEOTIDE SEQUENCE [LARGE SCALE MRNA] OF 1-349 AND 701-1443 (ISOFORM 1)</scope>
    <scope>NUCLEOTIDE SEQUENCE [LARGE SCALE MRNA] OF 1542-2108 (ISOFORMS 1/2)</scope>
    <source>
        <tissue>Brain</tissue>
        <tissue>Embryo</tissue>
        <tissue>Peripheral blood</tissue>
    </source>
</reference>
<reference key="3">
    <citation type="journal article" date="2004" name="Genome Res.">
        <title>The status, quality, and expansion of the NIH full-length cDNA project: the Mammalian Gene Collection (MGC).</title>
        <authorList>
            <consortium name="The MGC Project Team"/>
        </authorList>
    </citation>
    <scope>NUCLEOTIDE SEQUENCE [LARGE SCALE MRNA] OF 1-1203 (ISOFORM 2)</scope>
    <scope>NUCLEOTIDE SEQUENCE [LARGE SCALE MRNA] OF 201-333 (ISOFORM 1)</scope>
    <source>
        <tissue>Brain</tissue>
    </source>
</reference>
<reference key="4">
    <citation type="journal article" date="2017" name="Brain">
        <title>Exome sequencing and network analysis identifies shared mechanisms underlying spinocerebellar ataxia.</title>
        <authorList>
            <person name="Nibbeling E.A.R."/>
            <person name="Duarri A."/>
            <person name="Verschuuren-Bemelmans C.C."/>
            <person name="Fokkens M.R."/>
            <person name="Karjalainen J.M."/>
            <person name="Smeets C.J.L.M."/>
            <person name="de Boer-Bergsma J.J."/>
            <person name="van der Vries G."/>
            <person name="Dooijes D."/>
            <person name="Bampi G.B."/>
            <person name="van Diemen C."/>
            <person name="Brunt E."/>
            <person name="Ippel E."/>
            <person name="Kremer B."/>
            <person name="Vlak M."/>
            <person name="Adir N."/>
            <person name="Wijmenga C."/>
            <person name="van de Warrenburg B.P.C."/>
            <person name="Franke L."/>
            <person name="Sinke R.J."/>
            <person name="Verbeek D.S."/>
        </authorList>
    </citation>
    <scope>VARIANT ASN-1904</scope>
</reference>
<protein>
    <recommendedName>
        <fullName>Kinesin-like protein KIF26B</fullName>
    </recommendedName>
</protein>
<sequence>MNSVAGNKERLAVSTRGKKYGVNEVCSPTKPAAPFSPESWYRKAYEESRAGSRPTPEGAGSALGSSGTPSPGSGTSSPSSFTGSPGPASPGIGTSSPGSLGGSPGFGTGSPGSGSGGGSSPGSDRGVWCENCNARLVELKRQALRLLLPGPFPGKDPAFSAVIHDKLQVPNTIRKAWNDRDNRCDICATHLNQLKQEAIQMVLTLEQAAGSEHYDASPCSPPPLSNIPTLVGSRHVGGLQQPRDWAFVPAPCATSNYTGFANKHGSKPSSLGVSNGAEKKSGSPTHQAKVSLQMATSPSNGNILNSVAIQAHQYLDGTWSLSRTNGVTLYPYQISQLMTESSREGLTEAVLNRYNADKPSACSVPASQGSCVASETSTGTSVAASFFARAAQKLNLSSKKKKHRPSTSSAAEPPLFATSFSGILQTSPPPAPPCLLRAVNKVKDTPGLGKVKVMLRICSTLARDTSESSSFLKVDPRKKQITLYDPLTCGGQNAFQKRGNQVPPKMFAFDAVFPQDASQAEVCAGTVAEVIQSVVNGADGCVFCFGHAKLGKSYTMIGKDDSMQNLGIIPCAISWLFKLINERKEKTGARFSVRVSAVEVWGKEENLRDLLSEVATGSLQDGQSPGVYLCEDPICGTQLQNQSELRAPTAEKAAFFLDAAIASRRSHQQDCDEDDHRNSHVFFTLHIYQYRMEKSGKGGMSGGRSRLHLIDLGSCVKALSKNREGGSGLCLSLSALGNVILALVNGSKHIPYKESKLAMLLRESLGNMNCRTTMIAHISAAVGSYAETLSTIQIASRVLRMKKKKTKYTSSSSGGESSCEEGRMRRPTQLRPFHTRATVDPDFPIAHLSSDPDYSSSSEQSCDTVIYIGPNGTALSDKELTDNEGPPDFVPIVPALQKTRGDSRPAEAGEAAAGKSERDCLKCNTFAELQERLDCIDGSEEPSSFPFEELPAQFGPEQASRGPRLSQAAGASPLSESDKEDNGSEGQLTNREGPELPASKMQRSHSPVPAAAPAHSPSPASPRSVPGSSSQHSASPLVQSPSLQSSRESLNSCGFVEGKPRPMGSPRLGIASLSKTSEYKPPSSPSQRCKVYTQKGVLPSPAPLPPSSKDSGVASRESLLQPEVRTPPVGMSPQVLKKSMSAGSEGFPETPVDDEQQAATPSESKKEILSTTMVTVQQPLELNGEDELVFTLVEELTISGVLDSGRPTSIISFNSDCSARALASGSRPVSIISSISEDLECYSSTAPVSEVSITQFLPLPKMSLDEKAQDAGSRRSSISSWLSEMSAGSEGEQSCHSFIAQTCFGHGEAMAEPVASEFVSSLQNTAVVCREKPKASPDNLLILSEMGDDSFNKAAPIKGCKISTVSKAMVTISNTANLSSCEGYIPMKTNITVYPCIAMSPRNIQEPEAPTATPKAGPTLAQSRESKENSAKKEMKFEDPWLKREEEVKKETAHPNEEGMMRCETATGPSNAETRAEQEQDGKPSPGDRLSSSSGEVSASPVTDNFRRVVDGCEMALPGLATQSPVHPNKSVKSSSLPRAFQKASRQEEPDSLSYYCAAETNGVGAASGTPPSKATLEGKVASPKHCVLARPKGTPPLPPVRKSSLDQKNRASPQHSASGSGTSSPLNQPAAFPAGLPDEPSGKTKDASSSSKLFSAKLEQLASRSNSLGRATVSHYECLSLERAESLSSVSSRLHAGKDGTMPRAGRSLGRSAGTSPPSSGASPKAGQSKISAVSRLLLASPRARGPSASTTKTLSFSTKSLPQAVGQGSSSPPGGKHTPWSTQSLSRNRSSGLASKLPLRAVSGRISELLQGGAGARGLQLRAGPEAEARGGALAEDEPAAAHLLPSPYSKITPPRRPHRCSSGHGSDNSSVLSGELPPAMGKTALFYHSGGSSGYESVMRDSEATGSASSAQDSTSENSSSVGGRCRSLKTPKKRSNPGSQRRRLIPALSLDTSSPVRKPPNSTGVRWVDGPLRSSPRGLGEPFEIKVYEIDDVERLQRRRGGASKEAMCFNAKLKILEHRQQRIAEVRAKYEWLMKELEATKQYLMLDPNKWLSEFDLEQVWELDSLEYLEALECVTERLESRVNFCKAHLMMITCFDITSRRR</sequence>
<feature type="chain" id="PRO_0000307301" description="Kinesin-like protein KIF26B">
    <location>
        <begin position="1"/>
        <end position="2108"/>
    </location>
</feature>
<feature type="domain" description="Kinesin motor" evidence="3">
    <location>
        <begin position="450"/>
        <end position="801"/>
    </location>
</feature>
<feature type="region of interest" description="Disordered" evidence="4">
    <location>
        <begin position="1"/>
        <end position="124"/>
    </location>
</feature>
<feature type="region of interest" description="Disordered" evidence="4">
    <location>
        <begin position="263"/>
        <end position="287"/>
    </location>
</feature>
<feature type="region of interest" description="Disordered" evidence="4">
    <location>
        <begin position="805"/>
        <end position="825"/>
    </location>
</feature>
<feature type="region of interest" description="Disordered" evidence="4">
    <location>
        <begin position="876"/>
        <end position="917"/>
    </location>
</feature>
<feature type="region of interest" description="Disordered" evidence="4">
    <location>
        <begin position="937"/>
        <end position="1166"/>
    </location>
</feature>
<feature type="region of interest" description="Disordered" evidence="4">
    <location>
        <begin position="1406"/>
        <end position="1504"/>
    </location>
</feature>
<feature type="region of interest" description="Disordered" evidence="4">
    <location>
        <begin position="1519"/>
        <end position="1653"/>
    </location>
</feature>
<feature type="region of interest" description="Disordered" evidence="4">
    <location>
        <begin position="1685"/>
        <end position="1799"/>
    </location>
</feature>
<feature type="region of interest" description="Disordered" evidence="4">
    <location>
        <begin position="1824"/>
        <end position="1974"/>
    </location>
</feature>
<feature type="compositionally biased region" description="Basic and acidic residues" evidence="4">
    <location>
        <begin position="40"/>
        <end position="50"/>
    </location>
</feature>
<feature type="compositionally biased region" description="Low complexity" evidence="4">
    <location>
        <begin position="58"/>
        <end position="98"/>
    </location>
</feature>
<feature type="compositionally biased region" description="Gly residues" evidence="4">
    <location>
        <begin position="99"/>
        <end position="120"/>
    </location>
</feature>
<feature type="compositionally biased region" description="Low complexity" evidence="4">
    <location>
        <begin position="1004"/>
        <end position="1046"/>
    </location>
</feature>
<feature type="compositionally biased region" description="Basic and acidic residues" evidence="4">
    <location>
        <begin position="1424"/>
        <end position="1461"/>
    </location>
</feature>
<feature type="compositionally biased region" description="Low complexity" evidence="4">
    <location>
        <begin position="1491"/>
        <end position="1500"/>
    </location>
</feature>
<feature type="compositionally biased region" description="Polar residues" evidence="4">
    <location>
        <begin position="1521"/>
        <end position="1537"/>
    </location>
</feature>
<feature type="compositionally biased region" description="Polar residues" evidence="4">
    <location>
        <begin position="1611"/>
        <end position="1628"/>
    </location>
</feature>
<feature type="compositionally biased region" description="Low complexity" evidence="4">
    <location>
        <begin position="1713"/>
        <end position="1730"/>
    </location>
</feature>
<feature type="compositionally biased region" description="Low complexity" evidence="4">
    <location>
        <begin position="1751"/>
        <end position="1763"/>
    </location>
</feature>
<feature type="compositionally biased region" description="Polar residues" evidence="4">
    <location>
        <begin position="1781"/>
        <end position="1795"/>
    </location>
</feature>
<feature type="compositionally biased region" description="Low complexity" evidence="4">
    <location>
        <begin position="1824"/>
        <end position="1836"/>
    </location>
</feature>
<feature type="compositionally biased region" description="Polar residues" evidence="4">
    <location>
        <begin position="1866"/>
        <end position="1875"/>
    </location>
</feature>
<feature type="compositionally biased region" description="Polar residues" evidence="4">
    <location>
        <begin position="1907"/>
        <end position="1925"/>
    </location>
</feature>
<feature type="compositionally biased region" description="Basic residues" evidence="4">
    <location>
        <begin position="1930"/>
        <end position="1948"/>
    </location>
</feature>
<feature type="compositionally biased region" description="Polar residues" evidence="4">
    <location>
        <begin position="1954"/>
        <end position="1968"/>
    </location>
</feature>
<feature type="binding site" evidence="3">
    <location>
        <begin position="546"/>
        <end position="553"/>
    </location>
    <ligand>
        <name>ATP</name>
        <dbReference type="ChEBI" id="CHEBI:30616"/>
    </ligand>
</feature>
<feature type="modified residue" description="Phosphothreonine" evidence="2">
    <location>
        <position position="1855"/>
    </location>
</feature>
<feature type="modified residue" description="Phosphoserine" evidence="2">
    <location>
        <position position="1958"/>
    </location>
</feature>
<feature type="splice variant" id="VSP_028687" description="In isoform 2." evidence="6">
    <location>
        <begin position="1"/>
        <end position="383"/>
    </location>
</feature>
<feature type="splice variant" id="VSP_028693" description="In isoform 2." evidence="6">
    <original>ASFFAR</original>
    <variation>MDWKAV</variation>
    <location>
        <begin position="384"/>
        <end position="389"/>
    </location>
</feature>
<feature type="sequence variant" id="VAR_080730" description="Found in a patient with spinocerebellar ataxia; uncertain significance; dbSNP:rs749953234." evidence="5">
    <original>D</original>
    <variation>N</variation>
    <location>
        <position position="1904"/>
    </location>
</feature>
<feature type="sequence conflict" description="In Ref. 2; BAC86076." evidence="7" ref="2">
    <original>G</original>
    <variation>S</variation>
    <location>
        <position position="83"/>
    </location>
</feature>
<feature type="sequence conflict" description="In Ref. 2; BAC86076." evidence="7" ref="2">
    <original>T</original>
    <variation>A</variation>
    <location>
        <position position="108"/>
    </location>
</feature>
<feature type="sequence conflict" description="In Ref. 3; AAH35896." evidence="7" ref="3">
    <original>R</original>
    <variation>M</variation>
    <location>
        <position position="243"/>
    </location>
</feature>
<feature type="sequence conflict" description="In Ref. 2; BAA91469." evidence="7" ref="2">
    <original>L</original>
    <variation>P</variation>
    <location>
        <position position="1682"/>
    </location>
</feature>
<feature type="sequence conflict" description="In Ref. 2; BAA91469." evidence="7" ref="2">
    <original>R</original>
    <variation>H</variation>
    <location>
        <position position="1746"/>
    </location>
</feature>
<accession>Q2KJY2</accession>
<accession>Q6ZQR9</accession>
<accession>Q6ZUZ0</accession>
<accession>Q8IUN3</accession>
<accession>Q8IVR1</accession>
<accession>Q9NWB4</accession>
<comment type="function">
    <text evidence="1">Essential for embryonic kidney development. Plays an important role in the compact adhesion between mesenchymal cells adjacent to the ureteric buds, possibly by interacting with MYH10. This could lead to the establishment of the basolateral integrity of the mesenchyme and the polarized expression of ITGA8, which maintains the GDNF expression required for further ureteric bud attraction. Although it seems to lack ATPase activity it is constitutively associated with microtubules (By similarity).</text>
</comment>
<comment type="subunit">
    <text evidence="1">Interacts with MYH10.</text>
</comment>
<comment type="subcellular location">
    <subcellularLocation>
        <location evidence="1">Cytoplasm</location>
    </subcellularLocation>
    <subcellularLocation>
        <location evidence="7">Cytoplasm</location>
        <location evidence="7">Cytoskeleton</location>
    </subcellularLocation>
</comment>
<comment type="alternative products">
    <event type="alternative splicing"/>
    <isoform>
        <id>Q2KJY2-1</id>
        <name>1</name>
        <sequence type="displayed"/>
    </isoform>
    <isoform>
        <id>Q2KJY2-2</id>
        <name>2</name>
        <sequence type="described" ref="VSP_028687 VSP_028693"/>
    </isoform>
</comment>
<comment type="PTM">
    <text evidence="1">Phosphorylation at Thr-1855 and Ser-1958 by CDKs, mainly CDK2 and CDK5, enhances the interaction with NEDD4, polyubiquitination, and subsequent proteasomal degradation. Phosphorylation occurs upon loss of interaction with microtubules (By similarity).</text>
</comment>
<comment type="PTM">
    <text evidence="1">Polyubiquitinated by NEDD4, resulting in proteasomal degradation.</text>
</comment>
<comment type="similarity">
    <text evidence="3">Belongs to the TRAFAC class myosin-kinesin ATPase superfamily. Kinesin family. KIF26 subfamily.</text>
</comment>
<comment type="sequence caution" evidence="7">
    <conflict type="miscellaneous discrepancy">
        <sequence resource="EMBL-CDS" id="AAH42481"/>
    </conflict>
    <text>Probable cloning artifact.</text>
</comment>
<comment type="sequence caution" evidence="7">
    <conflict type="erroneous initiation">
        <sequence resource="EMBL-CDS" id="BAA91469"/>
    </conflict>
    <text>Truncated N-terminus.</text>
</comment>
<comment type="sequence caution" evidence="7">
    <conflict type="miscellaneous discrepancy">
        <sequence resource="EMBL-CDS" id="BAC86076"/>
    </conflict>
    <text>Aberrant splicing.</text>
</comment>
<comment type="sequence caution" evidence="7">
    <conflict type="miscellaneous discrepancy">
        <sequence resource="EMBL-CDS" id="BAC87614"/>
    </conflict>
    <text>Intron retention.</text>
</comment>
<name>KI26B_HUMAN</name>
<dbReference type="EMBL" id="AY923834">
    <property type="protein sequence ID" value="AAY17361.1"/>
    <property type="molecule type" value="mRNA"/>
</dbReference>
<dbReference type="EMBL" id="AK001019">
    <property type="protein sequence ID" value="BAA91469.1"/>
    <property type="status" value="ALT_INIT"/>
    <property type="molecule type" value="mRNA"/>
</dbReference>
<dbReference type="EMBL" id="AK125187">
    <property type="protein sequence ID" value="BAC86076.1"/>
    <property type="status" value="ALT_SEQ"/>
    <property type="molecule type" value="mRNA"/>
</dbReference>
<dbReference type="EMBL" id="AK128806">
    <property type="protein sequence ID" value="BAC87614.1"/>
    <property type="status" value="ALT_SEQ"/>
    <property type="molecule type" value="mRNA"/>
</dbReference>
<dbReference type="EMBL" id="BC035896">
    <property type="protein sequence ID" value="AAH35896.1"/>
    <property type="molecule type" value="mRNA"/>
</dbReference>
<dbReference type="EMBL" id="BC042481">
    <property type="protein sequence ID" value="AAH42481.1"/>
    <property type="status" value="ALT_SEQ"/>
    <property type="molecule type" value="mRNA"/>
</dbReference>
<dbReference type="CCDS" id="CCDS44342.1">
    <molecule id="Q2KJY2-1"/>
</dbReference>
<dbReference type="RefSeq" id="NP_060482.2">
    <molecule id="Q2KJY2-1"/>
    <property type="nucleotide sequence ID" value="NM_018012.3"/>
</dbReference>
<dbReference type="SMR" id="Q2KJY2"/>
<dbReference type="BioGRID" id="120398">
    <property type="interactions" value="56"/>
</dbReference>
<dbReference type="FunCoup" id="Q2KJY2">
    <property type="interactions" value="410"/>
</dbReference>
<dbReference type="IntAct" id="Q2KJY2">
    <property type="interactions" value="25"/>
</dbReference>
<dbReference type="STRING" id="9606.ENSP00000385545"/>
<dbReference type="GlyGen" id="Q2KJY2">
    <property type="glycosylation" value="4 sites, 1 O-linked glycan (1 site)"/>
</dbReference>
<dbReference type="iPTMnet" id="Q2KJY2"/>
<dbReference type="PhosphoSitePlus" id="Q2KJY2"/>
<dbReference type="BioMuta" id="KIF26B"/>
<dbReference type="DMDM" id="121948325"/>
<dbReference type="jPOST" id="Q2KJY2"/>
<dbReference type="MassIVE" id="Q2KJY2"/>
<dbReference type="PaxDb" id="9606-ENSP00000385545"/>
<dbReference type="PeptideAtlas" id="Q2KJY2"/>
<dbReference type="ProteomicsDB" id="61325">
    <molecule id="Q2KJY2-1"/>
</dbReference>
<dbReference type="ProteomicsDB" id="61326">
    <molecule id="Q2KJY2-2"/>
</dbReference>
<dbReference type="Antibodypedia" id="34719">
    <property type="antibodies" value="87 antibodies from 22 providers"/>
</dbReference>
<dbReference type="DNASU" id="55083"/>
<dbReference type="Ensembl" id="ENST00000407071.7">
    <molecule id="Q2KJY2-1"/>
    <property type="protein sequence ID" value="ENSP00000385545.2"/>
    <property type="gene ID" value="ENSG00000162849.16"/>
</dbReference>
<dbReference type="GeneID" id="55083"/>
<dbReference type="KEGG" id="hsa:55083"/>
<dbReference type="MANE-Select" id="ENST00000407071.7">
    <property type="protein sequence ID" value="ENSP00000385545.2"/>
    <property type="RefSeq nucleotide sequence ID" value="NM_018012.4"/>
    <property type="RefSeq protein sequence ID" value="NP_060482.2"/>
</dbReference>
<dbReference type="UCSC" id="uc001ibf.1">
    <molecule id="Q2KJY2-1"/>
    <property type="organism name" value="human"/>
</dbReference>
<dbReference type="AGR" id="HGNC:25484"/>
<dbReference type="CTD" id="55083"/>
<dbReference type="DisGeNET" id="55083"/>
<dbReference type="GeneCards" id="KIF26B"/>
<dbReference type="HGNC" id="HGNC:25484">
    <property type="gene designation" value="KIF26B"/>
</dbReference>
<dbReference type="HPA" id="ENSG00000162849">
    <property type="expression patterns" value="Tissue enhanced (brain)"/>
</dbReference>
<dbReference type="MalaCards" id="KIF26B"/>
<dbReference type="MIM" id="614026">
    <property type="type" value="gene"/>
</dbReference>
<dbReference type="neXtProt" id="NX_Q2KJY2"/>
<dbReference type="OpenTargets" id="ENSG00000162849"/>
<dbReference type="PharmGKB" id="PA145148575"/>
<dbReference type="VEuPathDB" id="HostDB:ENSG00000162849"/>
<dbReference type="eggNOG" id="KOG4280">
    <property type="taxonomic scope" value="Eukaryota"/>
</dbReference>
<dbReference type="GeneTree" id="ENSGT00940000156992"/>
<dbReference type="InParanoid" id="Q2KJY2"/>
<dbReference type="OMA" id="XSGGRSR"/>
<dbReference type="OrthoDB" id="8862460at2759"/>
<dbReference type="PAN-GO" id="Q2KJY2">
    <property type="GO annotations" value="3 GO annotations based on evolutionary models"/>
</dbReference>
<dbReference type="PhylomeDB" id="Q2KJY2"/>
<dbReference type="TreeFam" id="TF105235"/>
<dbReference type="PathwayCommons" id="Q2KJY2"/>
<dbReference type="Reactome" id="R-HSA-6811434">
    <property type="pathway name" value="COPI-dependent Golgi-to-ER retrograde traffic"/>
</dbReference>
<dbReference type="Reactome" id="R-HSA-983189">
    <property type="pathway name" value="Kinesins"/>
</dbReference>
<dbReference type="SignaLink" id="Q2KJY2"/>
<dbReference type="SIGNOR" id="Q2KJY2"/>
<dbReference type="BioGRID-ORCS" id="55083">
    <property type="hits" value="8 hits in 1148 CRISPR screens"/>
</dbReference>
<dbReference type="ChiTaRS" id="KIF26B">
    <property type="organism name" value="human"/>
</dbReference>
<dbReference type="GenomeRNAi" id="55083"/>
<dbReference type="Pharos" id="Q2KJY2">
    <property type="development level" value="Tbio"/>
</dbReference>
<dbReference type="PRO" id="PR:Q2KJY2"/>
<dbReference type="Proteomes" id="UP000005640">
    <property type="component" value="Chromosome 1"/>
</dbReference>
<dbReference type="RNAct" id="Q2KJY2">
    <property type="molecule type" value="protein"/>
</dbReference>
<dbReference type="Bgee" id="ENSG00000162849">
    <property type="expression patterns" value="Expressed in ventricular zone and 90 other cell types or tissues"/>
</dbReference>
<dbReference type="ExpressionAtlas" id="Q2KJY2">
    <property type="expression patterns" value="baseline and differential"/>
</dbReference>
<dbReference type="GO" id="GO:0005737">
    <property type="term" value="C:cytoplasm"/>
    <property type="evidence" value="ECO:0007669"/>
    <property type="project" value="UniProtKB-SubCell"/>
</dbReference>
<dbReference type="GO" id="GO:0005874">
    <property type="term" value="C:microtubule"/>
    <property type="evidence" value="ECO:0007669"/>
    <property type="project" value="UniProtKB-KW"/>
</dbReference>
<dbReference type="GO" id="GO:0005524">
    <property type="term" value="F:ATP binding"/>
    <property type="evidence" value="ECO:0007669"/>
    <property type="project" value="UniProtKB-KW"/>
</dbReference>
<dbReference type="GO" id="GO:0008017">
    <property type="term" value="F:microtubule binding"/>
    <property type="evidence" value="ECO:0007669"/>
    <property type="project" value="InterPro"/>
</dbReference>
<dbReference type="GO" id="GO:0003777">
    <property type="term" value="F:microtubule motor activity"/>
    <property type="evidence" value="ECO:0007669"/>
    <property type="project" value="InterPro"/>
</dbReference>
<dbReference type="GO" id="GO:0030010">
    <property type="term" value="P:establishment of cell polarity"/>
    <property type="evidence" value="ECO:0007669"/>
    <property type="project" value="Ensembl"/>
</dbReference>
<dbReference type="GO" id="GO:0007018">
    <property type="term" value="P:microtubule-based movement"/>
    <property type="evidence" value="ECO:0007669"/>
    <property type="project" value="InterPro"/>
</dbReference>
<dbReference type="GO" id="GO:0022409">
    <property type="term" value="P:positive regulation of cell-cell adhesion"/>
    <property type="evidence" value="ECO:0007669"/>
    <property type="project" value="Ensembl"/>
</dbReference>
<dbReference type="GO" id="GO:0072092">
    <property type="term" value="P:ureteric bud invasion"/>
    <property type="evidence" value="ECO:0007669"/>
    <property type="project" value="Ensembl"/>
</dbReference>
<dbReference type="CDD" id="cd00106">
    <property type="entry name" value="KISc"/>
    <property type="match status" value="1"/>
</dbReference>
<dbReference type="FunFam" id="3.40.850.10:FF:000015">
    <property type="entry name" value="Kinesin family member 26A"/>
    <property type="match status" value="1"/>
</dbReference>
<dbReference type="Gene3D" id="3.40.850.10">
    <property type="entry name" value="Kinesin motor domain"/>
    <property type="match status" value="1"/>
</dbReference>
<dbReference type="InterPro" id="IPR027640">
    <property type="entry name" value="Kinesin-like_fam"/>
</dbReference>
<dbReference type="InterPro" id="IPR001752">
    <property type="entry name" value="Kinesin_motor_dom"/>
</dbReference>
<dbReference type="InterPro" id="IPR036961">
    <property type="entry name" value="Kinesin_motor_dom_sf"/>
</dbReference>
<dbReference type="InterPro" id="IPR027417">
    <property type="entry name" value="P-loop_NTPase"/>
</dbReference>
<dbReference type="PANTHER" id="PTHR21608">
    <property type="entry name" value="KINESIN-LIKE PROTEIN CG14535"/>
    <property type="match status" value="1"/>
</dbReference>
<dbReference type="PANTHER" id="PTHR21608:SF8">
    <property type="entry name" value="KINESIN-LIKE PROTEIN KIF26B"/>
    <property type="match status" value="1"/>
</dbReference>
<dbReference type="Pfam" id="PF23081">
    <property type="entry name" value="HTH_KIF26A_B_1st"/>
    <property type="match status" value="1"/>
</dbReference>
<dbReference type="Pfam" id="PF00225">
    <property type="entry name" value="Kinesin"/>
    <property type="match status" value="1"/>
</dbReference>
<dbReference type="PRINTS" id="PR00380">
    <property type="entry name" value="KINESINHEAVY"/>
</dbReference>
<dbReference type="SMART" id="SM00129">
    <property type="entry name" value="KISc"/>
    <property type="match status" value="1"/>
</dbReference>
<dbReference type="SUPFAM" id="SSF52540">
    <property type="entry name" value="P-loop containing nucleoside triphosphate hydrolases"/>
    <property type="match status" value="1"/>
</dbReference>
<dbReference type="PROSITE" id="PS50067">
    <property type="entry name" value="KINESIN_MOTOR_2"/>
    <property type="match status" value="1"/>
</dbReference>
<gene>
    <name type="primary">KIF26B</name>
</gene>